<accession>P0C2W5</accession>
<comment type="function">
    <text evidence="1 4 6 9">Beta subunit of the heteropentameric ligand-gated chloride channel gated by gamma-aminobutyric acid (GABA), a major inhibitory neurotransmitter in the brain (PubMed:2548852). GABA-gated chloride channels, also named GABA(A) receptors (GABAAR), consist of five subunits arranged around a central pore and contain GABA active binding site(s) located at the alpha and beta subunit interface(s) (By similarity). When activated by GABA, GABAARs selectively allow the flow of chloride anions across the cell membrane down their electrochemical gradient (By similarity). Chloride influx into the postsynaptic neuron following GABAAR opening decreases the neuron ability to generate a new action potential, thereby reducing nerve transmission (By similarity). GABAARs containing alpha-1 and beta-2 or -3 subunits exhibit synaptogenic activity; the gamma-2 subunit being necessary but not sufficient to induce rapid synaptic contacts formation (By similarity). Extrasynaptic beta-2 receptors contribute to the tonic GABAergic inhibition (By similarity). Beta-containing GABAARs can simultaneously bind GABA and histamine where histamine binds at the interface of two neighboring beta subunits, which may be involved in the regulation of sleep and wakefulness (By similarity).</text>
</comment>
<comment type="catalytic activity">
    <reaction evidence="1">
        <text>chloride(in) = chloride(out)</text>
        <dbReference type="Rhea" id="RHEA:29823"/>
        <dbReference type="ChEBI" id="CHEBI:17996"/>
    </reaction>
</comment>
<comment type="activity regulation">
    <text evidence="4 6 8">Allosterically activated by benzodiazepines (By similarity). Allosterically activated by the anesthetic etomidate (PubMed:17093081). Inhibited by the antagonist bicuculline (By similarity). Potentiated by histamine (By similarity).</text>
</comment>
<comment type="subunit">
    <text evidence="6 9">Heteropentamer, formed by a combination of alpha (GABRA1-6), beta (GABRB1-3), gamma (GABRG1-3), delta (GABRD), epsilon (GABRE), rho (GABRR1-3), pi (GABRP) and theta (GABRQ) chains, each subunit exhibiting distinct physiological and pharmacological properties (PubMed:2548852). Interacts with UBQLN1 (By similarity). May interact with KIF21B (By similarity). Identified in a complex of 720 kDa composed of LHFPL4, NLGN2, GABRA1, GABRB2, GABRG2 and GABRB3 (By similarity).</text>
</comment>
<comment type="subcellular location">
    <subcellularLocation>
        <location evidence="5">Postsynaptic cell membrane</location>
        <topology evidence="4">Multi-pass membrane protein</topology>
    </subcellularLocation>
    <subcellularLocation>
        <location evidence="8 9">Cell membrane</location>
        <topology evidence="4">Multi-pass membrane protein</topology>
    </subcellularLocation>
    <subcellularLocation>
        <location evidence="6">Cytoplasmic vesicle membrane</location>
    </subcellularLocation>
</comment>
<comment type="domain">
    <text evidence="5">The extracellular domain contributes to synaptic contact formation.</text>
</comment>
<comment type="domain">
    <text evidence="4">GABAARs subunits share a common topological structure: a peptide sequence made up of a long extracellular N-terminal, four transmembrane domains, intracellular or cytoplasmic domain located between the third and the fourth transmembrane domains.</text>
</comment>
<comment type="PTM">
    <text evidence="5">Glycosylated.</text>
</comment>
<comment type="similarity">
    <text evidence="10">Belongs to the ligand-gated ion channel (TC 1.A.9) family. Gamma-aminobutyric acid receptor (TC 1.A.9.5) subfamily. GABRB2 sub-subfamily.</text>
</comment>
<feature type="signal peptide" evidence="8">
    <location>
        <begin position="1" status="less than"/>
        <end position="23"/>
    </location>
</feature>
<feature type="chain" id="PRO_0000286328" description="Gamma-aminobutyric acid receptor subunit beta-2">
    <location>
        <begin position="24"/>
        <end position="472"/>
    </location>
</feature>
<feature type="topological domain" description="Extracellular" evidence="10">
    <location>
        <begin position="24"/>
        <end position="239"/>
    </location>
</feature>
<feature type="transmembrane region" description="Helical" evidence="7">
    <location>
        <begin position="240"/>
        <end position="260"/>
    </location>
</feature>
<feature type="transmembrane region" description="Helical" evidence="7">
    <location>
        <begin position="271"/>
        <end position="290"/>
    </location>
</feature>
<feature type="transmembrane region" description="Helical" evidence="7">
    <location>
        <begin position="309"/>
        <end position="329"/>
    </location>
</feature>
<feature type="topological domain" description="Cytoplasmic" evidence="10">
    <location>
        <begin position="330"/>
        <end position="450"/>
    </location>
</feature>
<feature type="transmembrane region" description="Helical" evidence="7">
    <location>
        <begin position="451"/>
        <end position="471"/>
    </location>
</feature>
<feature type="region of interest" description="Etomidate binding; allosteric effector" evidence="8">
    <location>
        <begin position="287"/>
        <end position="308"/>
    </location>
</feature>
<feature type="binding site" description="in chain B" evidence="3">
    <location>
        <position position="119"/>
    </location>
    <ligand>
        <name>histamine</name>
        <dbReference type="ChEBI" id="CHEBI:58432"/>
        <note>ligand shared between two neighboring beta subunits</note>
    </ligand>
</feature>
<feature type="binding site" description="in chain B" evidence="3">
    <location>
        <begin position="178"/>
        <end position="179"/>
    </location>
    <ligand>
        <name>histamine</name>
        <dbReference type="ChEBI" id="CHEBI:58432"/>
        <note>ligand shared between two neighboring beta subunits</note>
    </ligand>
</feature>
<feature type="binding site" evidence="2">
    <location>
        <position position="179"/>
    </location>
    <ligand>
        <name>4-aminobutanoate</name>
        <dbReference type="ChEBI" id="CHEBI:59888"/>
        <note>ligand shared with the neighboring alpha subunit</note>
    </ligand>
</feature>
<feature type="binding site" evidence="4">
    <location>
        <position position="224"/>
    </location>
    <ligand>
        <name>4-aminobutanoate</name>
        <dbReference type="ChEBI" id="CHEBI:59888"/>
        <note>ligand shared with the neighboring alpha subunit</note>
    </ligand>
</feature>
<feature type="binding site" description="in chain B" evidence="3">
    <location>
        <position position="224"/>
    </location>
    <ligand>
        <name>histamine</name>
        <dbReference type="ChEBI" id="CHEBI:58432"/>
        <note>ligand shared between two neighboring beta subunits</note>
    </ligand>
</feature>
<feature type="modified residue" description="Phosphotyrosine" evidence="5">
    <location>
        <position position="401"/>
    </location>
</feature>
<feature type="glycosylation site" description="N-linked (GlcNAc...) asparagine" evidence="7">
    <location>
        <position position="30"/>
    </location>
</feature>
<feature type="glycosylation site" description="N-linked (GlcNAc...) asparagine" evidence="7">
    <location>
        <position position="102"/>
    </location>
</feature>
<feature type="disulfide bond" evidence="4">
    <location>
        <begin position="158"/>
        <end position="172"/>
    </location>
</feature>
<feature type="non-terminal residue">
    <location>
        <position position="1"/>
    </location>
</feature>
<keyword id="KW-1003">Cell membrane</keyword>
<keyword id="KW-0868">Chloride</keyword>
<keyword id="KW-0869">Chloride channel</keyword>
<keyword id="KW-0968">Cytoplasmic vesicle</keyword>
<keyword id="KW-0903">Direct protein sequencing</keyword>
<keyword id="KW-1015">Disulfide bond</keyword>
<keyword id="KW-0325">Glycoprotein</keyword>
<keyword id="KW-0407">Ion channel</keyword>
<keyword id="KW-0406">Ion transport</keyword>
<keyword id="KW-1071">Ligand-gated ion channel</keyword>
<keyword id="KW-0472">Membrane</keyword>
<keyword id="KW-0597">Phosphoprotein</keyword>
<keyword id="KW-0628">Postsynaptic cell membrane</keyword>
<keyword id="KW-0675">Receptor</keyword>
<keyword id="KW-1185">Reference proteome</keyword>
<keyword id="KW-0732">Signal</keyword>
<keyword id="KW-0770">Synapse</keyword>
<keyword id="KW-0812">Transmembrane</keyword>
<keyword id="KW-1133">Transmembrane helix</keyword>
<keyword id="KW-0813">Transport</keyword>
<protein>
    <recommendedName>
        <fullName evidence="4">Gamma-aminobutyric acid receptor subunit beta-2</fullName>
    </recommendedName>
    <alternativeName>
        <fullName>GABA(A) receptor subunit beta-2</fullName>
        <shortName evidence="4">GABAAR subunit beta-2</shortName>
    </alternativeName>
</protein>
<evidence type="ECO:0000250" key="1">
    <source>
        <dbReference type="UniProtKB" id="P08219"/>
    </source>
</evidence>
<evidence type="ECO:0000250" key="2">
    <source>
        <dbReference type="UniProtKB" id="P15431"/>
    </source>
</evidence>
<evidence type="ECO:0000250" key="3">
    <source>
        <dbReference type="UniProtKB" id="P28472"/>
    </source>
</evidence>
<evidence type="ECO:0000250" key="4">
    <source>
        <dbReference type="UniProtKB" id="P47870"/>
    </source>
</evidence>
<evidence type="ECO:0000250" key="5">
    <source>
        <dbReference type="UniProtKB" id="P63137"/>
    </source>
</evidence>
<evidence type="ECO:0000250" key="6">
    <source>
        <dbReference type="UniProtKB" id="P63138"/>
    </source>
</evidence>
<evidence type="ECO:0000255" key="7"/>
<evidence type="ECO:0000269" key="8">
    <source>
    </source>
</evidence>
<evidence type="ECO:0000269" key="9">
    <source>
    </source>
</evidence>
<evidence type="ECO:0000305" key="10"/>
<sequence>RVRKKDYFGIWSFPLIIAAVCAQSVNDPSNMSLVKETVDRLLKGYDIRLRPDFGGPPVAVGMNIDIASIDMVSEVNMDYTLTMYFQQAWRDKRLSYNVIPLNLTLDNRVADQLWVPDTYFLNDKKSFVHGVTVKNRMIRLHPDGTVLYGLRITTTTACMMDLRRYPLDEQNCTLEIESYGYTTDDIEFYWRGDDNAVTGVTKIELPQFSIVDYKLITKKVVFSTGSYPRLSLSFKLKRNIGYFILQTYMPSILITILSWVSFWINYDASAARVALGITTVLTMTTINTHLRETLPKIPYVKAIDMYLMGCFVFVFMALLEYALVNYIFFGRGPQRQKKAAEKAASANNEKMRLDVNKMDPHENILLSTLEIKNEMATSEAVMGLGDPRSTMLAYDASSIQYRKAGLPRHSFWRNALERHVAQKKSRLRERASQLKITIPDLTDVNAIDRWSRIFFPVVFSFFNIVYWLYYVN</sequence>
<gene>
    <name type="primary">GABRB2</name>
</gene>
<organism>
    <name type="scientific">Bos taurus</name>
    <name type="common">Bovine</name>
    <dbReference type="NCBI Taxonomy" id="9913"/>
    <lineage>
        <taxon>Eukaryota</taxon>
        <taxon>Metazoa</taxon>
        <taxon>Chordata</taxon>
        <taxon>Craniata</taxon>
        <taxon>Vertebrata</taxon>
        <taxon>Euteleostomi</taxon>
        <taxon>Mammalia</taxon>
        <taxon>Eutheria</taxon>
        <taxon>Laurasiatheria</taxon>
        <taxon>Artiodactyla</taxon>
        <taxon>Ruminantia</taxon>
        <taxon>Pecora</taxon>
        <taxon>Bovidae</taxon>
        <taxon>Bovinae</taxon>
        <taxon>Bos</taxon>
    </lineage>
</organism>
<dbReference type="SMR" id="P0C2W5"/>
<dbReference type="FunCoup" id="P0C2W5">
    <property type="interactions" value="106"/>
</dbReference>
<dbReference type="STRING" id="9913.ENSBTAP00000024736"/>
<dbReference type="GlyCosmos" id="P0C2W5">
    <property type="glycosylation" value="2 sites, No reported glycans"/>
</dbReference>
<dbReference type="GlyGen" id="P0C2W5">
    <property type="glycosylation" value="2 sites"/>
</dbReference>
<dbReference type="InParanoid" id="P0C2W5"/>
<dbReference type="OrthoDB" id="8890589at2759"/>
<dbReference type="Proteomes" id="UP000009136">
    <property type="component" value="Unplaced"/>
</dbReference>
<dbReference type="GO" id="GO:0034707">
    <property type="term" value="C:chloride channel complex"/>
    <property type="evidence" value="ECO:0007669"/>
    <property type="project" value="UniProtKB-KW"/>
</dbReference>
<dbReference type="GO" id="GO:0030659">
    <property type="term" value="C:cytoplasmic vesicle membrane"/>
    <property type="evidence" value="ECO:0007669"/>
    <property type="project" value="UniProtKB-SubCell"/>
</dbReference>
<dbReference type="GO" id="GO:1902711">
    <property type="term" value="C:GABA-A receptor complex"/>
    <property type="evidence" value="ECO:0000250"/>
    <property type="project" value="UniProtKB"/>
</dbReference>
<dbReference type="GO" id="GO:0005886">
    <property type="term" value="C:plasma membrane"/>
    <property type="evidence" value="ECO:0000250"/>
    <property type="project" value="UniProtKB"/>
</dbReference>
<dbReference type="GO" id="GO:0099634">
    <property type="term" value="C:postsynaptic specialization membrane"/>
    <property type="evidence" value="ECO:0000250"/>
    <property type="project" value="UniProtKB"/>
</dbReference>
<dbReference type="GO" id="GO:0005254">
    <property type="term" value="F:chloride channel activity"/>
    <property type="evidence" value="ECO:0000250"/>
    <property type="project" value="UniProtKB"/>
</dbReference>
<dbReference type="GO" id="GO:0005230">
    <property type="term" value="F:extracellular ligand-gated monoatomic ion channel activity"/>
    <property type="evidence" value="ECO:0007669"/>
    <property type="project" value="InterPro"/>
</dbReference>
<dbReference type="GO" id="GO:0004890">
    <property type="term" value="F:GABA-A receptor activity"/>
    <property type="evidence" value="ECO:0000250"/>
    <property type="project" value="UniProtKB"/>
</dbReference>
<dbReference type="GO" id="GO:0071420">
    <property type="term" value="P:cellular response to histamine"/>
    <property type="evidence" value="ECO:0000250"/>
    <property type="project" value="UniProtKB"/>
</dbReference>
<dbReference type="GO" id="GO:1902476">
    <property type="term" value="P:chloride transmembrane transport"/>
    <property type="evidence" value="ECO:0000250"/>
    <property type="project" value="UniProtKB"/>
</dbReference>
<dbReference type="GO" id="GO:1904862">
    <property type="term" value="P:inhibitory synapse assembly"/>
    <property type="evidence" value="ECO:0000250"/>
    <property type="project" value="UniProtKB"/>
</dbReference>
<dbReference type="CDD" id="cd18999">
    <property type="entry name" value="LGIC_ECD_GABAAR_B"/>
    <property type="match status" value="1"/>
</dbReference>
<dbReference type="CDD" id="cd19053">
    <property type="entry name" value="LGIC_TM_GABAAR_beta"/>
    <property type="match status" value="1"/>
</dbReference>
<dbReference type="FunFam" id="1.20.58.390:FF:000004">
    <property type="entry name" value="Gamma-aminobutyric acid receptor subunit beta-2 isoform A"/>
    <property type="match status" value="1"/>
</dbReference>
<dbReference type="FunFam" id="2.70.170.10:FF:000004">
    <property type="entry name" value="Gamma-aminobutyric acid receptor subunit beta-2 isoform A"/>
    <property type="match status" value="1"/>
</dbReference>
<dbReference type="Gene3D" id="2.70.170.10">
    <property type="entry name" value="Neurotransmitter-gated ion-channel ligand-binding domain"/>
    <property type="match status" value="1"/>
</dbReference>
<dbReference type="Gene3D" id="1.20.58.390">
    <property type="entry name" value="Neurotransmitter-gated ion-channel transmembrane domain"/>
    <property type="match status" value="1"/>
</dbReference>
<dbReference type="InterPro" id="IPR006028">
    <property type="entry name" value="GABAA/Glycine_rcpt"/>
</dbReference>
<dbReference type="InterPro" id="IPR002289">
    <property type="entry name" value="GABAAb_rcpt"/>
</dbReference>
<dbReference type="InterPro" id="IPR006202">
    <property type="entry name" value="Neur_chan_lig-bd"/>
</dbReference>
<dbReference type="InterPro" id="IPR036734">
    <property type="entry name" value="Neur_chan_lig-bd_sf"/>
</dbReference>
<dbReference type="InterPro" id="IPR006201">
    <property type="entry name" value="Neur_channel"/>
</dbReference>
<dbReference type="InterPro" id="IPR036719">
    <property type="entry name" value="Neuro-gated_channel_TM_sf"/>
</dbReference>
<dbReference type="InterPro" id="IPR038050">
    <property type="entry name" value="Neuro_actylchol_rec"/>
</dbReference>
<dbReference type="InterPro" id="IPR006029">
    <property type="entry name" value="Neurotrans-gated_channel_TM"/>
</dbReference>
<dbReference type="InterPro" id="IPR018000">
    <property type="entry name" value="Neurotransmitter_ion_chnl_CS"/>
</dbReference>
<dbReference type="NCBIfam" id="TIGR00860">
    <property type="entry name" value="LIC"/>
    <property type="match status" value="1"/>
</dbReference>
<dbReference type="PANTHER" id="PTHR18945">
    <property type="entry name" value="NEUROTRANSMITTER GATED ION CHANNEL"/>
    <property type="match status" value="1"/>
</dbReference>
<dbReference type="Pfam" id="PF02931">
    <property type="entry name" value="Neur_chan_LBD"/>
    <property type="match status" value="1"/>
</dbReference>
<dbReference type="Pfam" id="PF02932">
    <property type="entry name" value="Neur_chan_memb"/>
    <property type="match status" value="1"/>
</dbReference>
<dbReference type="PRINTS" id="PR01160">
    <property type="entry name" value="GABAARBETA"/>
</dbReference>
<dbReference type="PRINTS" id="PR00253">
    <property type="entry name" value="GABAARECEPTR"/>
</dbReference>
<dbReference type="PRINTS" id="PR00252">
    <property type="entry name" value="NRIONCHANNEL"/>
</dbReference>
<dbReference type="SUPFAM" id="SSF90112">
    <property type="entry name" value="Neurotransmitter-gated ion-channel transmembrane pore"/>
    <property type="match status" value="1"/>
</dbReference>
<dbReference type="SUPFAM" id="SSF63712">
    <property type="entry name" value="Nicotinic receptor ligand binding domain-like"/>
    <property type="match status" value="1"/>
</dbReference>
<dbReference type="PROSITE" id="PS00236">
    <property type="entry name" value="NEUROTR_ION_CHANNEL"/>
    <property type="match status" value="1"/>
</dbReference>
<name>GBRB2_BOVIN</name>
<proteinExistence type="evidence at protein level"/>
<reference key="1">
    <citation type="journal article" date="1989" name="EMBO J.">
        <title>GABAA receptor beta subunit heterogeneity: functional expression of cloned cDNAs.</title>
        <authorList>
            <person name="Ymer S."/>
            <person name="Schofield P.R."/>
            <person name="Draguhn A."/>
            <person name="Werner P."/>
            <person name="Koehler M."/>
            <person name="Seeburg P.H."/>
        </authorList>
    </citation>
    <scope>NUCLEOTIDE SEQUENCE [MRNA]</scope>
    <scope>PROTEIN SEQUENCE OF 358-374</scope>
    <scope>FUNCTION</scope>
    <scope>SUBCELLULAR LOCATION</scope>
    <scope>SUBUNIT</scope>
    <source>
        <tissue>Brain</tissue>
    </source>
</reference>
<reference key="2">
    <citation type="journal article" date="2006" name="J. Neurosci.">
        <title>Identification of a GABAA receptor anesthetic binding site at subunit interfaces by photolabeling with an etomidate analog.</title>
        <authorList>
            <person name="Li G.D."/>
            <person name="Chiara D.C."/>
            <person name="Sawyer G.W."/>
            <person name="Husain S.S."/>
            <person name="Olsen R.W."/>
            <person name="Cohen J.B."/>
        </authorList>
    </citation>
    <scope>PROTEIN SEQUENCE OF 24-35</scope>
    <scope>ACTIVITY REGULATION</scope>
    <scope>ANESTHETIC BINDING SITE</scope>
    <scope>SUBCELLULAR LOCATION</scope>
</reference>